<proteinExistence type="evidence at transcript level"/>
<evidence type="ECO:0000250" key="1">
    <source>
        <dbReference type="UniProtKB" id="P21237"/>
    </source>
</evidence>
<evidence type="ECO:0000250" key="2">
    <source>
        <dbReference type="UniProtKB" id="P23560"/>
    </source>
</evidence>
<evidence type="ECO:0000255" key="3"/>
<evidence type="ECO:0000305" key="4"/>
<reference key="1">
    <citation type="journal article" date="1991" name="Genomics">
        <title>Human and rat brain-derived neurotrophic factor and neurotrophin-3: gene structures, distributions, and chromosomal localizations.</title>
        <authorList>
            <person name="Maisonpierre P.C."/>
            <person name="le Beau M.M."/>
            <person name="Espinosa R. III"/>
            <person name="Ip N.Y."/>
            <person name="Belluscio L."/>
            <person name="de la Monte S.M."/>
            <person name="Squinto S."/>
            <person name="Furth M.E."/>
            <person name="Yancopoulos G.D."/>
        </authorList>
    </citation>
    <scope>NUCLEOTIDE SEQUENCE [GENOMIC DNA / MRNA]</scope>
</reference>
<reference key="2">
    <citation type="journal article" date="1992" name="Gene">
        <title>A rat brain-derived neurotrophic factor-encoding gene generates multiple transcripts through alternative use of 5' exons and polyadenylation sites.</title>
        <authorList>
            <person name="Ohara O."/>
            <person name="Gahara Y."/>
            <person name="Teraoka H."/>
            <person name="Kitamura T."/>
        </authorList>
    </citation>
    <scope>NUCLEOTIDE SEQUENCE [GENOMIC DNA]</scope>
</reference>
<reference key="3">
    <citation type="journal article" date="1990" name="Cold Spring Harb. Symp. Quant. Biol.">
        <title>Neurotrophic factors, their receptors, and the signal transduction pathways they activate.</title>
        <authorList>
            <person name="Yancopoulos G.D."/>
            <person name="Maisonpierre P.C."/>
            <person name="Ip N.Y."/>
            <person name="Aldrich T.H."/>
            <person name="Belluscio L."/>
            <person name="Boulton T.G."/>
            <person name="Cobb M.H."/>
            <person name="Squinto S.P."/>
            <person name="Furth M.E."/>
        </authorList>
    </citation>
    <scope>NUCLEOTIDE SEQUENCE [MRNA]</scope>
</reference>
<reference key="4">
    <citation type="journal article" date="2006" name="Brain Res.">
        <title>Rodent BDNF genes, novel promoters, novel splice variants, and regulation by cocaine.</title>
        <authorList>
            <person name="Liu Q.-R."/>
            <person name="Lu L."/>
            <person name="Zhu X.-G."/>
            <person name="Gong J.-P."/>
            <person name="Shaham Y."/>
            <person name="Uhl G.R."/>
        </authorList>
    </citation>
    <scope>NUCLEOTIDE SEQUENCE [MRNA]</scope>
    <source>
        <strain>Sprague-Dawley</strain>
    </source>
</reference>
<reference key="5">
    <citation type="journal article" date="2007" name="J. Neurosci. Res.">
        <title>Mouse and rat BDNF gene structure and expression revisited.</title>
        <authorList>
            <person name="Aid T."/>
            <person name="Kazantseva A."/>
            <person name="Piirsoo M."/>
            <person name="Palm K."/>
            <person name="Timmusk T."/>
        </authorList>
    </citation>
    <scope>NUCLEOTIDE SEQUENCE [MRNA]</scope>
    <source>
        <strain>Sprague-Dawley</strain>
    </source>
</reference>
<reference key="6">
    <citation type="submission" date="2002-11" db="EMBL/GenBank/DDBJ databases">
        <title>Reconstituting BDNF gene to bone marrow mesenchymal stem cells: serving as portals in the therapy of Parkinson's disease.</title>
        <authorList>
            <person name="Zhao L.X."/>
            <person name="Zhang J."/>
            <person name="Wang D.M."/>
            <person name="Yu X.J."/>
            <person name="Yue W."/>
            <person name="Pei X.T."/>
            <person name="Xu X.H."/>
        </authorList>
    </citation>
    <scope>NUCLEOTIDE SEQUENCE [MRNA]</scope>
    <source>
        <strain>Wistar</strain>
        <tissue>Brain</tissue>
    </source>
</reference>
<reference key="7">
    <citation type="journal article" date="2004" name="Genome Res.">
        <title>The status, quality, and expansion of the NIH full-length cDNA project: the Mammalian Gene Collection (MGC).</title>
        <authorList>
            <consortium name="The MGC Project Team"/>
        </authorList>
    </citation>
    <scope>NUCLEOTIDE SEQUENCE [LARGE SCALE MRNA]</scope>
    <source>
        <tissue>Brain</tissue>
    </source>
</reference>
<reference key="8">
    <citation type="journal article" date="1993" name="Neuron">
        <title>Multiple promoters direct tissue-specific expression of the rat BDNF gene.</title>
        <authorList>
            <person name="Timmusk T."/>
            <person name="Palm K."/>
            <person name="Metsis M."/>
            <person name="Reintam T."/>
            <person name="Palme V."/>
            <person name="Saarma M."/>
            <person name="Persson H."/>
        </authorList>
    </citation>
    <scope>NUCLEOTIDE SEQUENCE [MRNA] OF 8-249</scope>
</reference>
<reference key="9">
    <citation type="journal article" date="1991" name="Neuron">
        <title>Evolutionary studies of the nerve growth factor family reveal a novel member abundantly expressed in Xenopus ovary.</title>
        <authorList>
            <person name="Hallboeoek F."/>
            <person name="Ibanez C.F."/>
            <person name="Persson H."/>
        </authorList>
    </citation>
    <scope>NUCLEOTIDE SEQUENCE OF 187-229</scope>
    <source>
        <strain>Sprague-Dawley</strain>
        <tissue>Liver</tissue>
    </source>
</reference>
<dbReference type="EMBL" id="M61175">
    <property type="protein sequence ID" value="AAA16841.1"/>
    <property type="molecule type" value="mRNA"/>
</dbReference>
<dbReference type="EMBL" id="M61178">
    <property type="protein sequence ID" value="AAA63483.1"/>
    <property type="molecule type" value="Genomic_DNA"/>
</dbReference>
<dbReference type="EMBL" id="D10938">
    <property type="protein sequence ID" value="BAA01732.1"/>
    <property type="molecule type" value="Genomic_DNA"/>
</dbReference>
<dbReference type="EMBL" id="AY559248">
    <property type="protein sequence ID" value="AAS67380.1"/>
    <property type="molecule type" value="mRNA"/>
</dbReference>
<dbReference type="EMBL" id="AY559249">
    <property type="protein sequence ID" value="AAS67381.1"/>
    <property type="molecule type" value="mRNA"/>
</dbReference>
<dbReference type="EMBL" id="AY559250">
    <property type="protein sequence ID" value="AAS67382.1"/>
    <property type="molecule type" value="mRNA"/>
</dbReference>
<dbReference type="EMBL" id="EF125675">
    <property type="protein sequence ID" value="ABM30161.1"/>
    <property type="molecule type" value="mRNA"/>
</dbReference>
<dbReference type="EMBL" id="EF125676">
    <property type="protein sequence ID" value="ABM30162.1"/>
    <property type="molecule type" value="mRNA"/>
</dbReference>
<dbReference type="EMBL" id="EF125677">
    <property type="protein sequence ID" value="ABM30163.1"/>
    <property type="molecule type" value="mRNA"/>
</dbReference>
<dbReference type="EMBL" id="EF125678">
    <property type="protein sequence ID" value="ABM30164.1"/>
    <property type="molecule type" value="mRNA"/>
</dbReference>
<dbReference type="EMBL" id="EF125679">
    <property type="protein sequence ID" value="ABM30165.1"/>
    <property type="molecule type" value="mRNA"/>
</dbReference>
<dbReference type="EMBL" id="EF125680">
    <property type="protein sequence ID" value="ABM30166.1"/>
    <property type="molecule type" value="mRNA"/>
</dbReference>
<dbReference type="EMBL" id="EF125686">
    <property type="protein sequence ID" value="ABM30172.1"/>
    <property type="molecule type" value="mRNA"/>
</dbReference>
<dbReference type="EMBL" id="EF125687">
    <property type="protein sequence ID" value="ABM30173.1"/>
    <property type="molecule type" value="mRNA"/>
</dbReference>
<dbReference type="EMBL" id="EF125688">
    <property type="protein sequence ID" value="ABM30174.1"/>
    <property type="molecule type" value="mRNA"/>
</dbReference>
<dbReference type="EMBL" id="EF125689">
    <property type="protein sequence ID" value="ABM30175.1"/>
    <property type="molecule type" value="mRNA"/>
</dbReference>
<dbReference type="EMBL" id="EF125690">
    <property type="protein sequence ID" value="ABM30176.1"/>
    <property type="molecule type" value="mRNA"/>
</dbReference>
<dbReference type="EMBL" id="AY176065">
    <property type="protein sequence ID" value="AAO17828.1"/>
    <property type="molecule type" value="mRNA"/>
</dbReference>
<dbReference type="EMBL" id="BC087634">
    <property type="protein sequence ID" value="AAH87634.1"/>
    <property type="molecule type" value="mRNA"/>
</dbReference>
<dbReference type="EMBL" id="X67108">
    <property type="protein sequence ID" value="CAA47481.1"/>
    <property type="molecule type" value="mRNA"/>
</dbReference>
<dbReference type="PIR" id="B60536">
    <property type="entry name" value="B40304"/>
</dbReference>
<dbReference type="RefSeq" id="NP_001257559.1">
    <property type="nucleotide sequence ID" value="NM_001270630.1"/>
</dbReference>
<dbReference type="RefSeq" id="NP_001257560.1">
    <property type="nucleotide sequence ID" value="NM_001270631.1"/>
</dbReference>
<dbReference type="RefSeq" id="NP_001257561.1">
    <property type="nucleotide sequence ID" value="NM_001270632.1"/>
</dbReference>
<dbReference type="RefSeq" id="NP_001257562.1">
    <property type="nucleotide sequence ID" value="NM_001270633.1"/>
</dbReference>
<dbReference type="RefSeq" id="NP_001257563.1">
    <property type="nucleotide sequence ID" value="NM_001270634.1"/>
</dbReference>
<dbReference type="RefSeq" id="NP_001257564.1">
    <property type="nucleotide sequence ID" value="NM_001270635.1"/>
</dbReference>
<dbReference type="RefSeq" id="NP_001257565.1">
    <property type="nucleotide sequence ID" value="NM_001270636.1"/>
</dbReference>
<dbReference type="RefSeq" id="NP_001257566.1">
    <property type="nucleotide sequence ID" value="NM_001270637.1"/>
</dbReference>
<dbReference type="RefSeq" id="NP_001257567.1">
    <property type="nucleotide sequence ID" value="NM_001270638.1"/>
</dbReference>
<dbReference type="RefSeq" id="NP_036645.2">
    <property type="nucleotide sequence ID" value="NM_012513.4"/>
</dbReference>
<dbReference type="SMR" id="P23363"/>
<dbReference type="BioGRID" id="246413">
    <property type="interactions" value="3"/>
</dbReference>
<dbReference type="FunCoup" id="P23363">
    <property type="interactions" value="1666"/>
</dbReference>
<dbReference type="IntAct" id="P23363">
    <property type="interactions" value="3"/>
</dbReference>
<dbReference type="MINT" id="P23363"/>
<dbReference type="STRING" id="10116.ENSRNOP00000064356"/>
<dbReference type="GlyCosmos" id="P23363">
    <property type="glycosylation" value="1 site, No reported glycans"/>
</dbReference>
<dbReference type="GlyGen" id="P23363">
    <property type="glycosylation" value="2 sites"/>
</dbReference>
<dbReference type="PhosphoSitePlus" id="P23363"/>
<dbReference type="PaxDb" id="10116-ENSRNOP00000064356"/>
<dbReference type="ABCD" id="P23363">
    <property type="antibodies" value="2 sequenced antibodies"/>
</dbReference>
<dbReference type="Ensembl" id="ENSRNOT00000077703.2">
    <property type="protein sequence ID" value="ENSRNOP00000072849.1"/>
    <property type="gene ID" value="ENSRNOG00000047466.3"/>
</dbReference>
<dbReference type="Ensembl" id="ENSRNOT00000078543.2">
    <property type="protein sequence ID" value="ENSRNOP00000072315.1"/>
    <property type="gene ID" value="ENSRNOG00000047466.3"/>
</dbReference>
<dbReference type="Ensembl" id="ENSRNOT00000080190.2">
    <property type="protein sequence ID" value="ENSRNOP00000073265.1"/>
    <property type="gene ID" value="ENSRNOG00000047466.3"/>
</dbReference>
<dbReference type="Ensembl" id="ENSRNOT00000083289.2">
    <property type="protein sequence ID" value="ENSRNOP00000074338.1"/>
    <property type="gene ID" value="ENSRNOG00000047466.3"/>
</dbReference>
<dbReference type="Ensembl" id="ENSRNOT00000089233.2">
    <property type="protein sequence ID" value="ENSRNOP00000075479.1"/>
    <property type="gene ID" value="ENSRNOG00000047466.3"/>
</dbReference>
<dbReference type="Ensembl" id="ENSRNOT00000090445.2">
    <property type="protein sequence ID" value="ENSRNOP00000073685.1"/>
    <property type="gene ID" value="ENSRNOG00000047466.3"/>
</dbReference>
<dbReference type="GeneID" id="24225"/>
<dbReference type="KEGG" id="rno:24225"/>
<dbReference type="AGR" id="RGD:2202"/>
<dbReference type="CTD" id="627"/>
<dbReference type="RGD" id="2202">
    <property type="gene designation" value="Bdnf"/>
</dbReference>
<dbReference type="eggNOG" id="ENOG502QRU8">
    <property type="taxonomic scope" value="Eukaryota"/>
</dbReference>
<dbReference type="GeneTree" id="ENSGT00390000007725"/>
<dbReference type="InParanoid" id="P23363"/>
<dbReference type="OMA" id="YPGMRTH"/>
<dbReference type="OrthoDB" id="8959386at2759"/>
<dbReference type="PhylomeDB" id="P23363"/>
<dbReference type="Reactome" id="R-RNO-1257604">
    <property type="pathway name" value="PIP3 activates AKT signaling"/>
</dbReference>
<dbReference type="Reactome" id="R-RNO-6811558">
    <property type="pathway name" value="PI5P, PP2A and IER3 Regulate PI3K/AKT Signaling"/>
</dbReference>
<dbReference type="Reactome" id="R-RNO-9026527">
    <property type="pathway name" value="Activated NTRK2 signals through PLCG1"/>
</dbReference>
<dbReference type="Reactome" id="R-RNO-9028731">
    <property type="pathway name" value="Activated NTRK2 signals through FRS2 and FRS3"/>
</dbReference>
<dbReference type="Reactome" id="R-RNO-9032759">
    <property type="pathway name" value="NTRK2 activates RAC1"/>
</dbReference>
<dbReference type="PRO" id="PR:P23363"/>
<dbReference type="Proteomes" id="UP000002494">
    <property type="component" value="Chromosome 3"/>
</dbReference>
<dbReference type="Bgee" id="ENSRNOG00000047466">
    <property type="expression patterns" value="Expressed in heart and 7 other cell types or tissues"/>
</dbReference>
<dbReference type="ExpressionAtlas" id="P23363">
    <property type="expression patterns" value="baseline and differential"/>
</dbReference>
<dbReference type="GO" id="GO:0030424">
    <property type="term" value="C:axon"/>
    <property type="evidence" value="ECO:0000314"/>
    <property type="project" value="RGD"/>
</dbReference>
<dbReference type="GO" id="GO:0005737">
    <property type="term" value="C:cytoplasm"/>
    <property type="evidence" value="ECO:0000250"/>
    <property type="project" value="UniProtKB"/>
</dbReference>
<dbReference type="GO" id="GO:0031410">
    <property type="term" value="C:cytoplasmic vesicle"/>
    <property type="evidence" value="ECO:0000266"/>
    <property type="project" value="RGD"/>
</dbReference>
<dbReference type="GO" id="GO:0030425">
    <property type="term" value="C:dendrite"/>
    <property type="evidence" value="ECO:0000314"/>
    <property type="project" value="RGD"/>
</dbReference>
<dbReference type="GO" id="GO:0005576">
    <property type="term" value="C:extracellular region"/>
    <property type="evidence" value="ECO:0000304"/>
    <property type="project" value="Reactome"/>
</dbReference>
<dbReference type="GO" id="GO:0005615">
    <property type="term" value="C:extracellular space"/>
    <property type="evidence" value="ECO:0000314"/>
    <property type="project" value="RGD"/>
</dbReference>
<dbReference type="GO" id="GO:0098978">
    <property type="term" value="C:glutamatergic synapse"/>
    <property type="evidence" value="ECO:0000266"/>
    <property type="project" value="RGD"/>
</dbReference>
<dbReference type="GO" id="GO:0098686">
    <property type="term" value="C:hippocampal mossy fiber to CA3 synapse"/>
    <property type="evidence" value="ECO:0000266"/>
    <property type="project" value="RGD"/>
</dbReference>
<dbReference type="GO" id="GO:0030061">
    <property type="term" value="C:mitochondrial crista"/>
    <property type="evidence" value="ECO:0000314"/>
    <property type="project" value="RGD"/>
</dbReference>
<dbReference type="GO" id="GO:0043025">
    <property type="term" value="C:neuronal cell body"/>
    <property type="evidence" value="ECO:0000314"/>
    <property type="project" value="RGD"/>
</dbReference>
<dbReference type="GO" id="GO:0098992">
    <property type="term" value="C:neuronal dense core vesicle"/>
    <property type="evidence" value="ECO:0000266"/>
    <property type="project" value="RGD"/>
</dbReference>
<dbReference type="GO" id="GO:0043204">
    <property type="term" value="C:perikaryon"/>
    <property type="evidence" value="ECO:0000314"/>
    <property type="project" value="RGD"/>
</dbReference>
<dbReference type="GO" id="GO:0048471">
    <property type="term" value="C:perinuclear region of cytoplasm"/>
    <property type="evidence" value="ECO:0000250"/>
    <property type="project" value="UniProtKB"/>
</dbReference>
<dbReference type="GO" id="GO:0098794">
    <property type="term" value="C:postsynapse"/>
    <property type="evidence" value="ECO:0007669"/>
    <property type="project" value="GOC"/>
</dbReference>
<dbReference type="GO" id="GO:0030141">
    <property type="term" value="C:secretory granule"/>
    <property type="evidence" value="ECO:0000314"/>
    <property type="project" value="RGD"/>
</dbReference>
<dbReference type="GO" id="GO:0008021">
    <property type="term" value="C:synaptic vesicle"/>
    <property type="evidence" value="ECO:0000314"/>
    <property type="project" value="RGD"/>
</dbReference>
<dbReference type="GO" id="GO:0043195">
    <property type="term" value="C:terminal bouton"/>
    <property type="evidence" value="ECO:0000314"/>
    <property type="project" value="RGD"/>
</dbReference>
<dbReference type="GO" id="GO:0008083">
    <property type="term" value="F:growth factor activity"/>
    <property type="evidence" value="ECO:0000318"/>
    <property type="project" value="GO_Central"/>
</dbReference>
<dbReference type="GO" id="GO:0005163">
    <property type="term" value="F:nerve growth factor receptor binding"/>
    <property type="evidence" value="ECO:0000318"/>
    <property type="project" value="GO_Central"/>
</dbReference>
<dbReference type="GO" id="GO:0005169">
    <property type="term" value="F:neurotrophin TRKB receptor binding"/>
    <property type="evidence" value="ECO:0000314"/>
    <property type="project" value="RGD"/>
</dbReference>
<dbReference type="GO" id="GO:0048675">
    <property type="term" value="P:axon extension"/>
    <property type="evidence" value="ECO:0000266"/>
    <property type="project" value="RGD"/>
</dbReference>
<dbReference type="GO" id="GO:0007411">
    <property type="term" value="P:axon guidance"/>
    <property type="evidence" value="ECO:0000266"/>
    <property type="project" value="RGD"/>
</dbReference>
<dbReference type="GO" id="GO:0007412">
    <property type="term" value="P:axon target recognition"/>
    <property type="evidence" value="ECO:0000266"/>
    <property type="project" value="RGD"/>
</dbReference>
<dbReference type="GO" id="GO:0001662">
    <property type="term" value="P:behavioral fear response"/>
    <property type="evidence" value="ECO:0000266"/>
    <property type="project" value="RGD"/>
</dbReference>
<dbReference type="GO" id="GO:0048148">
    <property type="term" value="P:behavioral response to cocaine"/>
    <property type="evidence" value="ECO:0000315"/>
    <property type="project" value="RGD"/>
</dbReference>
<dbReference type="GO" id="GO:0007169">
    <property type="term" value="P:cell surface receptor protein tyrosine kinase signaling pathway"/>
    <property type="evidence" value="ECO:0000318"/>
    <property type="project" value="GO_Central"/>
</dbReference>
<dbReference type="GO" id="GO:1990090">
    <property type="term" value="P:cellular response to nerve growth factor stimulus"/>
    <property type="evidence" value="ECO:0000270"/>
    <property type="project" value="RGD"/>
</dbReference>
<dbReference type="GO" id="GO:0071874">
    <property type="term" value="P:cellular response to norepinephrine stimulus"/>
    <property type="evidence" value="ECO:0000270"/>
    <property type="project" value="RGD"/>
</dbReference>
<dbReference type="GO" id="GO:0035865">
    <property type="term" value="P:cellular response to potassium ion"/>
    <property type="evidence" value="ECO:0000270"/>
    <property type="project" value="RGD"/>
</dbReference>
<dbReference type="GO" id="GO:0071356">
    <property type="term" value="P:cellular response to tumor necrosis factor"/>
    <property type="evidence" value="ECO:0000270"/>
    <property type="project" value="RGD"/>
</dbReference>
<dbReference type="GO" id="GO:0002544">
    <property type="term" value="P:chronic inflammatory response"/>
    <property type="evidence" value="ECO:0000270"/>
    <property type="project" value="RGD"/>
</dbReference>
<dbReference type="GO" id="GO:0007623">
    <property type="term" value="P:circadian rhythm"/>
    <property type="evidence" value="ECO:0000266"/>
    <property type="project" value="RGD"/>
</dbReference>
<dbReference type="GO" id="GO:0050890">
    <property type="term" value="P:cognition"/>
    <property type="evidence" value="ECO:0000270"/>
    <property type="project" value="RGD"/>
</dbReference>
<dbReference type="GO" id="GO:0048668">
    <property type="term" value="P:collateral sprouting"/>
    <property type="evidence" value="ECO:0000266"/>
    <property type="project" value="RGD"/>
</dbReference>
<dbReference type="GO" id="GO:1990708">
    <property type="term" value="P:conditioned place preference"/>
    <property type="evidence" value="ECO:0000315"/>
    <property type="project" value="RGD"/>
</dbReference>
<dbReference type="GO" id="GO:0016358">
    <property type="term" value="P:dendrite development"/>
    <property type="evidence" value="ECO:0000266"/>
    <property type="project" value="RGD"/>
</dbReference>
<dbReference type="GO" id="GO:0097484">
    <property type="term" value="P:dendrite extension"/>
    <property type="evidence" value="ECO:0000266"/>
    <property type="project" value="RGD"/>
</dbReference>
<dbReference type="GO" id="GO:0060079">
    <property type="term" value="P:excitatory postsynaptic potential"/>
    <property type="evidence" value="ECO:0000315"/>
    <property type="project" value="RGD"/>
</dbReference>
<dbReference type="GO" id="GO:0042596">
    <property type="term" value="P:fear response"/>
    <property type="evidence" value="ECO:0000266"/>
    <property type="project" value="RGD"/>
</dbReference>
<dbReference type="GO" id="GO:0007631">
    <property type="term" value="P:feeding behavior"/>
    <property type="evidence" value="ECO:0000266"/>
    <property type="project" value="RGD"/>
</dbReference>
<dbReference type="GO" id="GO:0007214">
    <property type="term" value="P:gamma-aminobutyric acid signaling pathway"/>
    <property type="evidence" value="ECO:0000266"/>
    <property type="project" value="RGD"/>
</dbReference>
<dbReference type="GO" id="GO:0014047">
    <property type="term" value="P:glutamate secretion"/>
    <property type="evidence" value="ECO:0000266"/>
    <property type="project" value="RGD"/>
</dbReference>
<dbReference type="GO" id="GO:0060080">
    <property type="term" value="P:inhibitory postsynaptic potential"/>
    <property type="evidence" value="ECO:0000266"/>
    <property type="project" value="RGD"/>
</dbReference>
<dbReference type="GO" id="GO:0048839">
    <property type="term" value="P:inner ear development"/>
    <property type="evidence" value="ECO:0000266"/>
    <property type="project" value="RGD"/>
</dbReference>
<dbReference type="GO" id="GO:0007612">
    <property type="term" value="P:learning"/>
    <property type="evidence" value="ECO:0000315"/>
    <property type="project" value="RGD"/>
</dbReference>
<dbReference type="GO" id="GO:0007611">
    <property type="term" value="P:learning or memory"/>
    <property type="evidence" value="ECO:0000266"/>
    <property type="project" value="RGD"/>
</dbReference>
<dbReference type="GO" id="GO:0042490">
    <property type="term" value="P:mechanoreceptor differentiation"/>
    <property type="evidence" value="ECO:0000266"/>
    <property type="project" value="RGD"/>
</dbReference>
<dbReference type="GO" id="GO:0006120">
    <property type="term" value="P:mitochondrial electron transport, NADH to ubiquinone"/>
    <property type="evidence" value="ECO:0000315"/>
    <property type="project" value="RGD"/>
</dbReference>
<dbReference type="GO" id="GO:0050804">
    <property type="term" value="P:modulation of chemical synaptic transmission"/>
    <property type="evidence" value="ECO:0000318"/>
    <property type="project" value="GO_Central"/>
</dbReference>
<dbReference type="GO" id="GO:0043066">
    <property type="term" value="P:negative regulation of apoptotic process"/>
    <property type="evidence" value="ECO:0000266"/>
    <property type="project" value="RGD"/>
</dbReference>
<dbReference type="GO" id="GO:2001234">
    <property type="term" value="P:negative regulation of apoptotic signaling pathway"/>
    <property type="evidence" value="ECO:0000266"/>
    <property type="project" value="RGD"/>
</dbReference>
<dbReference type="GO" id="GO:0010832">
    <property type="term" value="P:negative regulation of myotube differentiation"/>
    <property type="evidence" value="ECO:0000315"/>
    <property type="project" value="BHF-UCL"/>
</dbReference>
<dbReference type="GO" id="GO:0007406">
    <property type="term" value="P:negative regulation of neuroblast proliferation"/>
    <property type="evidence" value="ECO:0000266"/>
    <property type="project" value="RGD"/>
</dbReference>
<dbReference type="GO" id="GO:0043524">
    <property type="term" value="P:negative regulation of neuron apoptotic process"/>
    <property type="evidence" value="ECO:0000266"/>
    <property type="project" value="RGD"/>
</dbReference>
<dbReference type="GO" id="GO:0043069">
    <property type="term" value="P:negative regulation of programmed cell death"/>
    <property type="evidence" value="ECO:0000266"/>
    <property type="project" value="RGD"/>
</dbReference>
<dbReference type="GO" id="GO:0045843">
    <property type="term" value="P:negative regulation of striated muscle tissue development"/>
    <property type="evidence" value="ECO:0000315"/>
    <property type="project" value="RGD"/>
</dbReference>
<dbReference type="GO" id="GO:0032229">
    <property type="term" value="P:negative regulation of synaptic transmission, GABAergic"/>
    <property type="evidence" value="ECO:0000266"/>
    <property type="project" value="RGD"/>
</dbReference>
<dbReference type="GO" id="GO:0021675">
    <property type="term" value="P:nerve development"/>
    <property type="evidence" value="ECO:0000266"/>
    <property type="project" value="RGD"/>
</dbReference>
<dbReference type="GO" id="GO:0038180">
    <property type="term" value="P:nerve growth factor signaling pathway"/>
    <property type="evidence" value="ECO:0000318"/>
    <property type="project" value="GO_Central"/>
</dbReference>
<dbReference type="GO" id="GO:0007399">
    <property type="term" value="P:nervous system development"/>
    <property type="evidence" value="ECO:0000314"/>
    <property type="project" value="RGD"/>
</dbReference>
<dbReference type="GO" id="GO:0051402">
    <property type="term" value="P:neuron apoptotic process"/>
    <property type="evidence" value="ECO:0000266"/>
    <property type="project" value="RGD"/>
</dbReference>
<dbReference type="GO" id="GO:0030182">
    <property type="term" value="P:neuron differentiation"/>
    <property type="evidence" value="ECO:0000304"/>
    <property type="project" value="RGD"/>
</dbReference>
<dbReference type="GO" id="GO:1990138">
    <property type="term" value="P:neuron projection extension"/>
    <property type="evidence" value="ECO:0000314"/>
    <property type="project" value="RGD"/>
</dbReference>
<dbReference type="GO" id="GO:0048812">
    <property type="term" value="P:neuron projection morphogenesis"/>
    <property type="evidence" value="ECO:0000318"/>
    <property type="project" value="GO_Central"/>
</dbReference>
<dbReference type="GO" id="GO:0031102">
    <property type="term" value="P:neuron projection regeneration"/>
    <property type="evidence" value="ECO:0000315"/>
    <property type="project" value="RGD"/>
</dbReference>
<dbReference type="GO" id="GO:0008038">
    <property type="term" value="P:neuron recognition"/>
    <property type="evidence" value="ECO:0000266"/>
    <property type="project" value="RGD"/>
</dbReference>
<dbReference type="GO" id="GO:0048680">
    <property type="term" value="P:positive regulation of axon regeneration"/>
    <property type="evidence" value="ECO:0000315"/>
    <property type="project" value="RGD"/>
</dbReference>
<dbReference type="GO" id="GO:0048672">
    <property type="term" value="P:positive regulation of collateral sprouting"/>
    <property type="evidence" value="ECO:0000266"/>
    <property type="project" value="RGD"/>
</dbReference>
<dbReference type="GO" id="GO:0051091">
    <property type="term" value="P:positive regulation of DNA-binding transcription factor activity"/>
    <property type="evidence" value="ECO:0000314"/>
    <property type="project" value="MGI"/>
</dbReference>
<dbReference type="GO" id="GO:0048170">
    <property type="term" value="P:positive regulation of long-term neuronal synaptic plasticity"/>
    <property type="evidence" value="ECO:0000315"/>
    <property type="project" value="RGD"/>
</dbReference>
<dbReference type="GO" id="GO:0043525">
    <property type="term" value="P:positive regulation of neuron apoptotic process"/>
    <property type="evidence" value="ECO:0000315"/>
    <property type="project" value="RGD"/>
</dbReference>
<dbReference type="GO" id="GO:0045666">
    <property type="term" value="P:positive regulation of neuron differentiation"/>
    <property type="evidence" value="ECO:0000266"/>
    <property type="project" value="RGD"/>
</dbReference>
<dbReference type="GO" id="GO:0010976">
    <property type="term" value="P:positive regulation of neuron projection development"/>
    <property type="evidence" value="ECO:0000266"/>
    <property type="project" value="RGD"/>
</dbReference>
<dbReference type="GO" id="GO:2000324">
    <property type="term" value="P:positive regulation of nuclear receptor-mediated glucocorticoid signaling pathway"/>
    <property type="evidence" value="ECO:0000314"/>
    <property type="project" value="MGI"/>
</dbReference>
<dbReference type="GO" id="GO:0033138">
    <property type="term" value="P:positive regulation of peptidyl-serine phosphorylation"/>
    <property type="evidence" value="ECO:0000316"/>
    <property type="project" value="MGI"/>
</dbReference>
<dbReference type="GO" id="GO:1900122">
    <property type="term" value="P:positive regulation of receptor binding"/>
    <property type="evidence" value="ECO:0000314"/>
    <property type="project" value="ParkinsonsUK-UCL"/>
</dbReference>
<dbReference type="GO" id="GO:0051965">
    <property type="term" value="P:positive regulation of synapse assembly"/>
    <property type="evidence" value="ECO:0000266"/>
    <property type="project" value="RGD"/>
</dbReference>
<dbReference type="GO" id="GO:0031099">
    <property type="term" value="P:regeneration"/>
    <property type="evidence" value="ECO:0000314"/>
    <property type="project" value="RGD"/>
</dbReference>
<dbReference type="GO" id="GO:0030516">
    <property type="term" value="P:regulation of axon extension"/>
    <property type="evidence" value="ECO:0000315"/>
    <property type="project" value="RGD"/>
</dbReference>
<dbReference type="GO" id="GO:0048670">
    <property type="term" value="P:regulation of collateral sprouting"/>
    <property type="evidence" value="ECO:0000266"/>
    <property type="project" value="RGD"/>
</dbReference>
<dbReference type="GO" id="GO:0048169">
    <property type="term" value="P:regulation of long-term neuronal synaptic plasticity"/>
    <property type="evidence" value="ECO:0000314"/>
    <property type="project" value="RGD"/>
</dbReference>
<dbReference type="GO" id="GO:0043523">
    <property type="term" value="P:regulation of neuron apoptotic process"/>
    <property type="evidence" value="ECO:0000266"/>
    <property type="project" value="RGD"/>
</dbReference>
<dbReference type="GO" id="GO:0046668">
    <property type="term" value="P:regulation of retinal cell programmed cell death"/>
    <property type="evidence" value="ECO:0000266"/>
    <property type="project" value="RGD"/>
</dbReference>
<dbReference type="GO" id="GO:0048172">
    <property type="term" value="P:regulation of short-term neuronal synaptic plasticity"/>
    <property type="evidence" value="ECO:0000314"/>
    <property type="project" value="RGD"/>
</dbReference>
<dbReference type="GO" id="GO:0048167">
    <property type="term" value="P:regulation of synaptic plasticity"/>
    <property type="evidence" value="ECO:0000266"/>
    <property type="project" value="RGD"/>
</dbReference>
<dbReference type="GO" id="GO:0014823">
    <property type="term" value="P:response to activity"/>
    <property type="evidence" value="ECO:0000270"/>
    <property type="project" value="RGD"/>
</dbReference>
<dbReference type="GO" id="GO:0072347">
    <property type="term" value="P:response to anesthetic"/>
    <property type="evidence" value="ECO:0000270"/>
    <property type="project" value="RGD"/>
</dbReference>
<dbReference type="GO" id="GO:0010996">
    <property type="term" value="P:response to auditory stimulus"/>
    <property type="evidence" value="ECO:0000270"/>
    <property type="project" value="RGD"/>
</dbReference>
<dbReference type="GO" id="GO:0051602">
    <property type="term" value="P:response to electrical stimulus"/>
    <property type="evidence" value="ECO:0000270"/>
    <property type="project" value="RGD"/>
</dbReference>
<dbReference type="GO" id="GO:0045471">
    <property type="term" value="P:response to ethanol"/>
    <property type="evidence" value="ECO:0000270"/>
    <property type="project" value="RGD"/>
</dbReference>
<dbReference type="GO" id="GO:0032094">
    <property type="term" value="P:response to food"/>
    <property type="evidence" value="ECO:0000270"/>
    <property type="project" value="RGD"/>
</dbReference>
<dbReference type="GO" id="GO:0009725">
    <property type="term" value="P:response to hormone"/>
    <property type="evidence" value="ECO:0000270"/>
    <property type="project" value="RGD"/>
</dbReference>
<dbReference type="GO" id="GO:0055093">
    <property type="term" value="P:response to hyperoxia"/>
    <property type="evidence" value="ECO:0000270"/>
    <property type="project" value="RGD"/>
</dbReference>
<dbReference type="GO" id="GO:0001666">
    <property type="term" value="P:response to hypoxia"/>
    <property type="evidence" value="ECO:0000270"/>
    <property type="project" value="RGD"/>
</dbReference>
<dbReference type="GO" id="GO:1902065">
    <property type="term" value="P:response to L-glutamate"/>
    <property type="evidence" value="ECO:0000270"/>
    <property type="project" value="RGD"/>
</dbReference>
<dbReference type="GO" id="GO:0009642">
    <property type="term" value="P:response to light intensity"/>
    <property type="evidence" value="ECO:0000270"/>
    <property type="project" value="RGD"/>
</dbReference>
<dbReference type="GO" id="GO:0009416">
    <property type="term" value="P:response to light stimulus"/>
    <property type="evidence" value="ECO:0000270"/>
    <property type="project" value="RGD"/>
</dbReference>
<dbReference type="GO" id="GO:0043278">
    <property type="term" value="P:response to morphine"/>
    <property type="evidence" value="ECO:0000270"/>
    <property type="project" value="RGD"/>
</dbReference>
<dbReference type="GO" id="GO:1990089">
    <property type="term" value="P:response to nerve growth factor"/>
    <property type="evidence" value="ECO:0000270"/>
    <property type="project" value="RGD"/>
</dbReference>
<dbReference type="GO" id="GO:0031667">
    <property type="term" value="P:response to nutrient levels"/>
    <property type="evidence" value="ECO:0000270"/>
    <property type="project" value="RGD"/>
</dbReference>
<dbReference type="GO" id="GO:0035864">
    <property type="term" value="P:response to potassium ion"/>
    <property type="evidence" value="ECO:0000270"/>
    <property type="project" value="RGD"/>
</dbReference>
<dbReference type="GO" id="GO:0034612">
    <property type="term" value="P:response to tumor necrosis factor"/>
    <property type="evidence" value="ECO:0000270"/>
    <property type="project" value="RGD"/>
</dbReference>
<dbReference type="GO" id="GO:0033189">
    <property type="term" value="P:response to vitamin A"/>
    <property type="evidence" value="ECO:0000270"/>
    <property type="project" value="RGD"/>
</dbReference>
<dbReference type="GO" id="GO:0009410">
    <property type="term" value="P:response to xenobiotic stimulus"/>
    <property type="evidence" value="ECO:0000270"/>
    <property type="project" value="RGD"/>
</dbReference>
<dbReference type="GO" id="GO:0007416">
    <property type="term" value="P:synapse assembly"/>
    <property type="evidence" value="ECO:0000266"/>
    <property type="project" value="RGD"/>
</dbReference>
<dbReference type="GO" id="GO:0061193">
    <property type="term" value="P:taste bud development"/>
    <property type="evidence" value="ECO:0000266"/>
    <property type="project" value="RGD"/>
</dbReference>
<dbReference type="GO" id="GO:0099183">
    <property type="term" value="P:trans-synaptic signaling by BDNF, modulating synaptic transmission"/>
    <property type="evidence" value="ECO:0000266"/>
    <property type="project" value="RGD"/>
</dbReference>
<dbReference type="GO" id="GO:0001657">
    <property type="term" value="P:ureteric bud development"/>
    <property type="evidence" value="ECO:0000266"/>
    <property type="project" value="RGD"/>
</dbReference>
<dbReference type="FunFam" id="2.10.90.10:FF:000002">
    <property type="entry name" value="Brain-derived neurotrophic factor"/>
    <property type="match status" value="1"/>
</dbReference>
<dbReference type="Gene3D" id="2.10.90.10">
    <property type="entry name" value="Cystine-knot cytokines"/>
    <property type="match status" value="1"/>
</dbReference>
<dbReference type="InterPro" id="IPR020430">
    <property type="entry name" value="Brain-der_neurotrophic_factor"/>
</dbReference>
<dbReference type="InterPro" id="IPR029034">
    <property type="entry name" value="Cystine-knot_cytokine"/>
</dbReference>
<dbReference type="InterPro" id="IPR020408">
    <property type="entry name" value="Nerve_growth_factor-like"/>
</dbReference>
<dbReference type="InterPro" id="IPR002072">
    <property type="entry name" value="Nerve_growth_factor-rel"/>
</dbReference>
<dbReference type="InterPro" id="IPR019846">
    <property type="entry name" value="Nerve_growth_factor_CS"/>
</dbReference>
<dbReference type="PANTHER" id="PTHR11589:SF3">
    <property type="entry name" value="BRAIN-DERIVED NEUROTROPHIC FACTOR"/>
    <property type="match status" value="1"/>
</dbReference>
<dbReference type="PANTHER" id="PTHR11589">
    <property type="entry name" value="NERVE GROWTH FACTOR NGF -RELATED"/>
    <property type="match status" value="1"/>
</dbReference>
<dbReference type="Pfam" id="PF00243">
    <property type="entry name" value="NGF"/>
    <property type="match status" value="1"/>
</dbReference>
<dbReference type="PIRSF" id="PIRSF001789">
    <property type="entry name" value="NGF"/>
    <property type="match status" value="1"/>
</dbReference>
<dbReference type="PRINTS" id="PR01912">
    <property type="entry name" value="BDNFACTOR"/>
</dbReference>
<dbReference type="PRINTS" id="PR00268">
    <property type="entry name" value="NGF"/>
</dbReference>
<dbReference type="SMART" id="SM00140">
    <property type="entry name" value="NGF"/>
    <property type="match status" value="1"/>
</dbReference>
<dbReference type="SUPFAM" id="SSF57501">
    <property type="entry name" value="Cystine-knot cytokines"/>
    <property type="match status" value="1"/>
</dbReference>
<dbReference type="PROSITE" id="PS00248">
    <property type="entry name" value="NGF_1"/>
    <property type="match status" value="1"/>
</dbReference>
<dbReference type="PROSITE" id="PS50270">
    <property type="entry name" value="NGF_2"/>
    <property type="match status" value="1"/>
</dbReference>
<gene>
    <name type="primary">Bdnf</name>
</gene>
<sequence length="249" mass="28109">MTILFLTMVISYFGCMKAAPMKEANVHGQGNLAYPAVRTHGTLESVNGPRAGSRGLTTTSLADTFEHVIEELLDEDQKVRPNEENHKDADLYTSRVMLSSQVPLEPPLLFLLEEYKNYLDAANMSMRVRRHSDPARRGELSVCDSISEWVTAADKKTAVDMSGGTVTVLEKVPVSKGQLKQYFYETKCNPMGYTKEGCRGIDKRHWNSQCRTTQSYVRALTMDSKKRIGWRFIRIDTSCVCTLTIKRGR</sequence>
<feature type="signal peptide" evidence="3">
    <location>
        <begin position="1"/>
        <end position="18"/>
    </location>
</feature>
<feature type="chain" id="PRO_0000447540" description="Neurotrophic factor BDNF precursor form">
    <location>
        <begin position="19"/>
        <end position="249"/>
    </location>
</feature>
<feature type="propeptide" id="PRO_0000019643" evidence="1">
    <location>
        <begin position="19"/>
        <end position="130"/>
    </location>
</feature>
<feature type="chain" id="PRO_0000019644" description="Neurotrophic factor BDNF">
    <location>
        <begin position="131"/>
        <end position="249"/>
    </location>
</feature>
<feature type="site" description="Cleavage; by MBTPS1" evidence="2">
    <location>
        <begin position="59"/>
        <end position="60"/>
    </location>
</feature>
<feature type="glycosylation site" description="N-linked (GlcNAc...) asparagine" evidence="3">
    <location>
        <position position="123"/>
    </location>
</feature>
<feature type="disulfide bond" evidence="2">
    <location>
        <begin position="143"/>
        <end position="210"/>
    </location>
</feature>
<feature type="disulfide bond" evidence="2">
    <location>
        <begin position="188"/>
        <end position="239"/>
    </location>
</feature>
<feature type="disulfide bond" evidence="2">
    <location>
        <begin position="198"/>
        <end position="241"/>
    </location>
</feature>
<name>BDNF_RAT</name>
<organism>
    <name type="scientific">Rattus norvegicus</name>
    <name type="common">Rat</name>
    <dbReference type="NCBI Taxonomy" id="10116"/>
    <lineage>
        <taxon>Eukaryota</taxon>
        <taxon>Metazoa</taxon>
        <taxon>Chordata</taxon>
        <taxon>Craniata</taxon>
        <taxon>Vertebrata</taxon>
        <taxon>Euteleostomi</taxon>
        <taxon>Mammalia</taxon>
        <taxon>Eutheria</taxon>
        <taxon>Euarchontoglires</taxon>
        <taxon>Glires</taxon>
        <taxon>Rodentia</taxon>
        <taxon>Myomorpha</taxon>
        <taxon>Muroidea</taxon>
        <taxon>Muridae</taxon>
        <taxon>Murinae</taxon>
        <taxon>Rattus</taxon>
    </lineage>
</organism>
<accession>P23363</accession>
<accession>Q53YL8</accession>
<protein>
    <recommendedName>
        <fullName evidence="4">Neurotrophic factor BDNF precursor form</fullName>
        <shortName>proBDNF</shortName>
    </recommendedName>
    <alternativeName>
        <fullName>Brain-derived neurotrophic factor</fullName>
    </alternativeName>
    <component>
        <recommendedName>
            <fullName>Neurotrophic factor BDNF</fullName>
        </recommendedName>
    </component>
</protein>
<keyword id="KW-0165">Cleavage on pair of basic residues</keyword>
<keyword id="KW-1015">Disulfide bond</keyword>
<keyword id="KW-0325">Glycoprotein</keyword>
<keyword id="KW-0339">Growth factor</keyword>
<keyword id="KW-1185">Reference proteome</keyword>
<keyword id="KW-0964">Secreted</keyword>
<keyword id="KW-0732">Signal</keyword>
<comment type="function">
    <text evidence="1 2">Important signaling molecule that activates signaling cascades downstream of NTRK2 (By similarity). During development, promotes the survival and differentiation of selected neuronal populations of the peripheral and central nervous systems. Participates in axonal growth, pathfinding and in the modulation of dendritic growth and morphology. Major regulator of synaptic transmission and plasticity at adult synapses in many regions of the CNS. The versatility of BDNF is emphasized by its contribution to a range of adaptive neuronal responses including long-term potentiation (LTP), long-term depression (LTD), certain forms of short-term synaptic plasticity, as well as homeostatic regulation of intrinsic neuronal excitability (By similarity).</text>
</comment>
<comment type="function">
    <molecule>Neurotrophic factor BDNF precursor form</molecule>
    <text evidence="1">Important signaling molecule that activates signaling cascades downstream of NTRK2. Activates signaling cascades via the heterodimeric receptor formed by NGFR and SORCS2. Signaling via NGFR and SORCS2 plays a role in synaptic plasticity and long-term depression (LTD). Binding to NGFR and SORCS2 promotes neuronal apoptosis. Promotes neuronal growth cone collapse.</text>
</comment>
<comment type="subunit">
    <text evidence="1 2">Monomers and homodimers (By similarity). Binds to NTRK2/TRKB. Can form heterodimers with other neurotrophin family members, such as NTF3 and NTF4 (in vitro), but the physiological relevance of this is not clear (By similarity). BDNF precursor form: interacts with the heterodimer formed by NGFR and SORCS2. Mature BDNF has much lower affinity for the heterodimer formed by NGFR and SORCS2 (By similarity).</text>
</comment>
<comment type="subcellular location">
    <subcellularLocation>
        <location evidence="2">Secreted</location>
    </subcellularLocation>
</comment>
<comment type="subcellular location">
    <molecule>Neurotrophic factor BDNF precursor form</molecule>
    <subcellularLocation>
        <location evidence="2">Secreted</location>
    </subcellularLocation>
    <text evidence="2">A proportion of BDNF is secreted as immature precursor (proBDNF).</text>
</comment>
<comment type="PTM">
    <molecule>Neurotrophic factor BDNF precursor form</molecule>
    <text evidence="2">N-glycosylated and glycosulfated, contrary to mature BDNF.</text>
</comment>
<comment type="PTM">
    <text evidence="2">Mature BDNF is produced by proteolytic removal of the propeptide, catalyzed by a FURIN family member. In addition, the precursor form is proteolytically cleaved within the propeptide, but this is not an obligatory intermediate for the production of mature BDNF. Can be converted into mature BDNF by plasmin (PLG).</text>
</comment>
<comment type="similarity">
    <text evidence="4">Belongs to the NGF-beta family.</text>
</comment>